<feature type="chain" id="PRO_0000153946" description="Thiamine thiazole synthase">
    <location>
        <begin position="1"/>
        <end position="260"/>
    </location>
</feature>
<feature type="binding site" description="in other chain" evidence="1">
    <location>
        <position position="36"/>
    </location>
    <ligand>
        <name>NAD(+)</name>
        <dbReference type="ChEBI" id="CHEBI:57540"/>
        <note>ligand shared between two adjacent protomers</note>
    </ligand>
</feature>
<feature type="binding site" description="in other chain" evidence="1">
    <location>
        <begin position="55"/>
        <end position="56"/>
    </location>
    <ligand>
        <name>NAD(+)</name>
        <dbReference type="ChEBI" id="CHEBI:57540"/>
        <note>ligand shared between two adjacent protomers</note>
    </ligand>
</feature>
<feature type="binding site" description="in other chain" evidence="1">
    <location>
        <position position="63"/>
    </location>
    <ligand>
        <name>NAD(+)</name>
        <dbReference type="ChEBI" id="CHEBI:57540"/>
        <note>ligand shared between two adjacent protomers</note>
    </ligand>
</feature>
<feature type="binding site" evidence="1">
    <location>
        <begin position="154"/>
        <end position="156"/>
    </location>
    <ligand>
        <name>NAD(+)</name>
        <dbReference type="ChEBI" id="CHEBI:57540"/>
        <note>ligand shared between two adjacent protomers</note>
    </ligand>
</feature>
<feature type="binding site" evidence="1">
    <location>
        <position position="156"/>
    </location>
    <ligand>
        <name>Fe cation</name>
        <dbReference type="ChEBI" id="CHEBI:24875"/>
        <note>ligand shared between two adjacent protomers</note>
    </ligand>
</feature>
<feature type="binding site" description="in other chain" evidence="1">
    <location>
        <position position="171"/>
    </location>
    <ligand>
        <name>Fe cation</name>
        <dbReference type="ChEBI" id="CHEBI:24875"/>
        <note>ligand shared between two adjacent protomers</note>
    </ligand>
</feature>
<feature type="binding site" description="in other chain" evidence="1">
    <location>
        <position position="224"/>
    </location>
    <ligand>
        <name>NAD(+)</name>
        <dbReference type="ChEBI" id="CHEBI:57540"/>
        <note>ligand shared between two adjacent protomers</note>
    </ligand>
</feature>
<feature type="binding site" evidence="1">
    <location>
        <position position="234"/>
    </location>
    <ligand>
        <name>glycine</name>
        <dbReference type="ChEBI" id="CHEBI:57305"/>
    </ligand>
</feature>
<proteinExistence type="evidence at protein level"/>
<organism>
    <name type="scientific">Methanosarcina acetivorans (strain ATCC 35395 / DSM 2834 / JCM 12185 / C2A)</name>
    <dbReference type="NCBI Taxonomy" id="188937"/>
    <lineage>
        <taxon>Archaea</taxon>
        <taxon>Methanobacteriati</taxon>
        <taxon>Methanobacteriota</taxon>
        <taxon>Stenosarchaea group</taxon>
        <taxon>Methanomicrobia</taxon>
        <taxon>Methanosarcinales</taxon>
        <taxon>Methanosarcinaceae</taxon>
        <taxon>Methanosarcina</taxon>
    </lineage>
</organism>
<accession>Q8TM19</accession>
<evidence type="ECO:0000255" key="1">
    <source>
        <dbReference type="HAMAP-Rule" id="MF_00304"/>
    </source>
</evidence>
<evidence type="ECO:0000305" key="2"/>
<protein>
    <recommendedName>
        <fullName evidence="1">Thiamine thiazole synthase</fullName>
        <ecNumber evidence="1">2.4.2.59</ecNumber>
    </recommendedName>
</protein>
<reference key="1">
    <citation type="journal article" date="2002" name="Genome Res.">
        <title>The genome of Methanosarcina acetivorans reveals extensive metabolic and physiological diversity.</title>
        <authorList>
            <person name="Galagan J.E."/>
            <person name="Nusbaum C."/>
            <person name="Roy A."/>
            <person name="Endrizzi M.G."/>
            <person name="Macdonald P."/>
            <person name="FitzHugh W."/>
            <person name="Calvo S."/>
            <person name="Engels R."/>
            <person name="Smirnov S."/>
            <person name="Atnoor D."/>
            <person name="Brown A."/>
            <person name="Allen N."/>
            <person name="Naylor J."/>
            <person name="Stange-Thomann N."/>
            <person name="DeArellano K."/>
            <person name="Johnson R."/>
            <person name="Linton L."/>
            <person name="McEwan P."/>
            <person name="McKernan K."/>
            <person name="Talamas J."/>
            <person name="Tirrell A."/>
            <person name="Ye W."/>
            <person name="Zimmer A."/>
            <person name="Barber R.D."/>
            <person name="Cann I."/>
            <person name="Graham D.E."/>
            <person name="Grahame D.A."/>
            <person name="Guss A.M."/>
            <person name="Hedderich R."/>
            <person name="Ingram-Smith C."/>
            <person name="Kuettner H.C."/>
            <person name="Krzycki J.A."/>
            <person name="Leigh J.A."/>
            <person name="Li W."/>
            <person name="Liu J."/>
            <person name="Mukhopadhyay B."/>
            <person name="Reeve J.N."/>
            <person name="Smith K."/>
            <person name="Springer T.A."/>
            <person name="Umayam L.A."/>
            <person name="White O."/>
            <person name="White R.H."/>
            <person name="de Macario E.C."/>
            <person name="Ferry J.G."/>
            <person name="Jarrell K.F."/>
            <person name="Jing H."/>
            <person name="Macario A.J.L."/>
            <person name="Paulsen I.T."/>
            <person name="Pritchett M."/>
            <person name="Sowers K.R."/>
            <person name="Swanson R.V."/>
            <person name="Zinder S.H."/>
            <person name="Lander E."/>
            <person name="Metcalf W.W."/>
            <person name="Birren B."/>
        </authorList>
    </citation>
    <scope>NUCLEOTIDE SEQUENCE [LARGE SCALE GENOMIC DNA]</scope>
    <source>
        <strain>ATCC 35395 / DSM 2834 / JCM 12185 / C2A</strain>
    </source>
</reference>
<reference key="2">
    <citation type="journal article" date="2004" name="J. Bacteriol.">
        <title>Modified pathway to synthesize ribulose 1,5-bisphosphate in methanogenic archaea.</title>
        <authorList>
            <person name="Finn M.W."/>
            <person name="Tabita F.R."/>
        </authorList>
    </citation>
    <scope>PRELIMINARY FUNCTION IN CO(2) FIXATION WITH RUBISCO</scope>
</reference>
<dbReference type="EC" id="2.4.2.59" evidence="1"/>
<dbReference type="EMBL" id="AE010299">
    <property type="protein sequence ID" value="AAM06230.1"/>
    <property type="molecule type" value="Genomic_DNA"/>
</dbReference>
<dbReference type="RefSeq" id="WP_011022803.1">
    <property type="nucleotide sequence ID" value="NC_003552.1"/>
</dbReference>
<dbReference type="SMR" id="Q8TM19"/>
<dbReference type="FunCoup" id="Q8TM19">
    <property type="interactions" value="114"/>
</dbReference>
<dbReference type="STRING" id="188937.MA_2851"/>
<dbReference type="EnsemblBacteria" id="AAM06230">
    <property type="protein sequence ID" value="AAM06230"/>
    <property type="gene ID" value="MA_2851"/>
</dbReference>
<dbReference type="GeneID" id="1474748"/>
<dbReference type="KEGG" id="mac:MA_2851"/>
<dbReference type="HOGENOM" id="CLU_053727_2_0_2"/>
<dbReference type="InParanoid" id="Q8TM19"/>
<dbReference type="OrthoDB" id="4240at2157"/>
<dbReference type="PhylomeDB" id="Q8TM19"/>
<dbReference type="UniPathway" id="UPA00060"/>
<dbReference type="Proteomes" id="UP000002487">
    <property type="component" value="Chromosome"/>
</dbReference>
<dbReference type="GO" id="GO:0005506">
    <property type="term" value="F:iron ion binding"/>
    <property type="evidence" value="ECO:0000318"/>
    <property type="project" value="GO_Central"/>
</dbReference>
<dbReference type="GO" id="GO:0016763">
    <property type="term" value="F:pentosyltransferase activity"/>
    <property type="evidence" value="ECO:0007669"/>
    <property type="project" value="UniProtKB-UniRule"/>
</dbReference>
<dbReference type="GO" id="GO:0009228">
    <property type="term" value="P:thiamine biosynthetic process"/>
    <property type="evidence" value="ECO:0007669"/>
    <property type="project" value="UniProtKB-KW"/>
</dbReference>
<dbReference type="GO" id="GO:0009229">
    <property type="term" value="P:thiamine diphosphate biosynthetic process"/>
    <property type="evidence" value="ECO:0007669"/>
    <property type="project" value="UniProtKB-UniRule"/>
</dbReference>
<dbReference type="GO" id="GO:0052837">
    <property type="term" value="P:thiazole biosynthetic process"/>
    <property type="evidence" value="ECO:0000318"/>
    <property type="project" value="GO_Central"/>
</dbReference>
<dbReference type="Gene3D" id="3.50.50.60">
    <property type="entry name" value="FAD/NAD(P)-binding domain"/>
    <property type="match status" value="1"/>
</dbReference>
<dbReference type="HAMAP" id="MF_00304">
    <property type="entry name" value="Thi4"/>
    <property type="match status" value="1"/>
</dbReference>
<dbReference type="InterPro" id="IPR036188">
    <property type="entry name" value="FAD/NAD-bd_sf"/>
</dbReference>
<dbReference type="InterPro" id="IPR002922">
    <property type="entry name" value="Thi4_fam"/>
</dbReference>
<dbReference type="InterPro" id="IPR022828">
    <property type="entry name" value="Thi4_prok"/>
</dbReference>
<dbReference type="NCBIfam" id="TIGR00292">
    <property type="entry name" value="sulfide-dependent adenosine diphosphate thiazole synthase"/>
    <property type="match status" value="1"/>
</dbReference>
<dbReference type="PANTHER" id="PTHR43422">
    <property type="entry name" value="THIAMINE THIAZOLE SYNTHASE"/>
    <property type="match status" value="1"/>
</dbReference>
<dbReference type="PANTHER" id="PTHR43422:SF3">
    <property type="entry name" value="THIAMINE THIAZOLE SYNTHASE"/>
    <property type="match status" value="1"/>
</dbReference>
<dbReference type="Pfam" id="PF01946">
    <property type="entry name" value="Thi4"/>
    <property type="match status" value="1"/>
</dbReference>
<dbReference type="PRINTS" id="PR00419">
    <property type="entry name" value="ADXRDTASE"/>
</dbReference>
<dbReference type="SUPFAM" id="SSF51905">
    <property type="entry name" value="FAD/NAD(P)-binding domain"/>
    <property type="match status" value="1"/>
</dbReference>
<sequence>MELDEVIITRAIFDEYSKTFLDYTDIDVALVGGGPANLVAAKYLAEAGVKVALYEQKLSLGGGMWAGGMMFPRIVVQEEATRILDDFGIRYKEYESGYYVANSVESVGKLIAGATSAGAEVFNLVSFEDIMIRENDRVTGIVINWGPVTTQRLHVDPLMIRTKLVIDGTGHEAVVCNTILRKIPNAKIGELGLLGEKPMWSEVGERLAVNATQEIYPGLIVAGMAANAATRAPRMGPVFGGMLLSGEKAAKLALDRLKTI</sequence>
<keyword id="KW-0408">Iron</keyword>
<keyword id="KW-0479">Metal-binding</keyword>
<keyword id="KW-0520">NAD</keyword>
<keyword id="KW-1185">Reference proteome</keyword>
<keyword id="KW-0784">Thiamine biosynthesis</keyword>
<keyword id="KW-0808">Transferase</keyword>
<comment type="function">
    <text evidence="1">Involved in the biosynthesis of the thiazole moiety of thiamine. Catalyzes the conversion of NAD and glycine to adenosine diphosphate 5-(2-hydroxyethyl)-4-methylthiazole-2-carboxylate (ADT), an adenylated thiazole intermediate, using free sulfide as a source of sulfur.</text>
</comment>
<comment type="catalytic activity">
    <reaction evidence="1">
        <text>hydrogen sulfide + glycine + NAD(+) = ADP-5-ethyl-4-methylthiazole-2-carboxylate + nicotinamide + 3 H2O + H(+)</text>
        <dbReference type="Rhea" id="RHEA:55704"/>
        <dbReference type="ChEBI" id="CHEBI:15377"/>
        <dbReference type="ChEBI" id="CHEBI:15378"/>
        <dbReference type="ChEBI" id="CHEBI:17154"/>
        <dbReference type="ChEBI" id="CHEBI:29919"/>
        <dbReference type="ChEBI" id="CHEBI:57305"/>
        <dbReference type="ChEBI" id="CHEBI:57540"/>
        <dbReference type="ChEBI" id="CHEBI:139151"/>
        <dbReference type="EC" id="2.4.2.59"/>
    </reaction>
</comment>
<comment type="cofactor">
    <cofactor evidence="1">
        <name>Fe(2+)</name>
        <dbReference type="ChEBI" id="CHEBI:29033"/>
    </cofactor>
</comment>
<comment type="pathway">
    <text evidence="1">Cofactor biosynthesis; thiamine diphosphate biosynthesis.</text>
</comment>
<comment type="subunit">
    <text evidence="1">Homooctamer; tetramer of dimers.</text>
</comment>
<comment type="similarity">
    <text evidence="1">Belongs to the THI4 family.</text>
</comment>
<comment type="caution">
    <text evidence="2">This protein was originally thought to have ribose 1,5-bisphosphate isomerase activity despite the fact that some recombinant ortholog proteins were not active in vitro (PubMed:15375115, PubMed:17303759). Moreover, another protein from M.acetivorans likely possesses this activity (MA_0379). Finally, a thiamine synthase activity has been shown for the ortholog protein in M.jannaschii.</text>
</comment>
<name>THI4_METAC</name>
<gene>
    <name evidence="1" type="primary">thi4</name>
    <name type="ordered locus">MA_2851</name>
</gene>